<gene>
    <name type="primary">UL98</name>
</gene>
<proteinExistence type="inferred from homology"/>
<accession>F5HF49</accession>
<reference key="1">
    <citation type="journal article" date="2004" name="J. Gen. Virol.">
        <title>Genetic content of wild-type human cytomegalovirus.</title>
        <authorList>
            <person name="Dolan A."/>
            <person name="Cunningham C."/>
            <person name="Hector R.D."/>
            <person name="Hassan-Walker A.F."/>
            <person name="Lee L."/>
            <person name="Addison C."/>
            <person name="Dargan D.J."/>
            <person name="McGeoch D.J."/>
            <person name="Gatherer D."/>
            <person name="Emery V.C."/>
            <person name="Griffiths P.D."/>
            <person name="Sinzger C."/>
            <person name="McSharry B.P."/>
            <person name="Wilkinson G.W.G."/>
            <person name="Davison A.J."/>
        </authorList>
    </citation>
    <scope>NUCLEOTIDE SEQUENCE [LARGE SCALE GENOMIC DNA]</scope>
</reference>
<organismHost>
    <name type="scientific">Homo sapiens</name>
    <name type="common">Human</name>
    <dbReference type="NCBI Taxonomy" id="9606"/>
</organismHost>
<keyword id="KW-0255">Endonuclease</keyword>
<keyword id="KW-0269">Exonuclease</keyword>
<keyword id="KW-1035">Host cytoplasm</keyword>
<keyword id="KW-1048">Host nucleus</keyword>
<keyword id="KW-0945">Host-virus interaction</keyword>
<keyword id="KW-0378">Hydrolase</keyword>
<keyword id="KW-0540">Nuclease</keyword>
<keyword id="KW-1185">Reference proteome</keyword>
<sequence>MWGVSSLDYDDDEELTRLLAVWDDEPLSLFLMNTFLLHQEGFRNLPFTVLRLSYAYRIFAKMLRAHGTPVAEDFMTRVAALARDEGLRDILGQRHAAEASRAEIAEALERVAERCDDRHGGSDDYVWLSRLLDLAPNYRQVELFQLLEKESRGQSRNSVWHLLRMDTVSATKFYEAFVSGCLPGAAAADGSGGGGSHYTGSRAGVSPGIQFGIKHEGLVKTLVECYVMHGREPVRDGLGLLIDPTSGLLGASMDLCFGVLKQGSGRTLLVEPCARVYEIKCRYKYLRKKEDPFVQNVLRRHDAAAVASLLQSHPVPGVEFRGERETPSAREFLLSHDAALFRATLKRARPLKPPEPLREYLADLLYLNKAECSEVIVFDAKHLNDDNSDGDATITINASLGLAAGDAAGGGADHHLRGSPGDSPPPIPFEDENTPELLGRLNVYEVARFSLPAFVNPRHQYYFQMLIQQYVLSQYYIKKHPDPERIDFRDLPTVYLVSAIFREREESELGCELLAGGRVFHCDHIPLLLIVTPVVFDPQFTRHAVSTVLDRWSRDLSRKTNLPIWVPNSANEYVVSSVPRPVSP</sequence>
<comment type="function">
    <text evidence="1">Plays a role in processing non linear or branched viral DNA intermediates in order to promote the production of mature packaged unit-length linear progeny viral DNA molecules. Exhibits endonuclease and exonuclease activities and accepts both double-stranded and single-stranded DNA as substrate. Exonuclease digestion of DNA is in the 5'-&gt; 3' direction and the products are 5'-monophosphate nucleosides. Additionally, forms a recombinase with the major DNA-binding protein, which displays strand exchange activity.</text>
</comment>
<comment type="subunit">
    <text evidence="1">Interacts with major DNA-binding protein; this interaction increases the nuclease processivity of the alkaline exonuclease.</text>
</comment>
<comment type="subcellular location">
    <subcellularLocation>
        <location evidence="1">Host nucleus</location>
    </subcellularLocation>
    <subcellularLocation>
        <location evidence="1">Host cytoplasm</location>
    </subcellularLocation>
</comment>
<comment type="similarity">
    <text evidence="1">Belongs to the herpesviridae alkaline nuclease family.</text>
</comment>
<evidence type="ECO:0000255" key="1">
    <source>
        <dbReference type="HAMAP-Rule" id="MF_04009"/>
    </source>
</evidence>
<evidence type="ECO:0000256" key="2">
    <source>
        <dbReference type="SAM" id="MobiDB-lite"/>
    </source>
</evidence>
<name>AN_HCMVM</name>
<dbReference type="EC" id="3.1.-.-" evidence="1"/>
<dbReference type="EMBL" id="AY446894">
    <property type="protein sequence ID" value="AAR31649.1"/>
    <property type="molecule type" value="Genomic_DNA"/>
</dbReference>
<dbReference type="RefSeq" id="YP_081545.1">
    <property type="nucleotide sequence ID" value="NC_006273.2"/>
</dbReference>
<dbReference type="SMR" id="F5HF49"/>
<dbReference type="GeneID" id="3077527"/>
<dbReference type="KEGG" id="vg:3077527"/>
<dbReference type="Reactome" id="R-HSA-9609690">
    <property type="pathway name" value="HCMV Early Events"/>
</dbReference>
<dbReference type="Proteomes" id="UP000000938">
    <property type="component" value="Segment"/>
</dbReference>
<dbReference type="GO" id="GO:0030430">
    <property type="term" value="C:host cell cytoplasm"/>
    <property type="evidence" value="ECO:0007669"/>
    <property type="project" value="UniProtKB-SubCell"/>
</dbReference>
<dbReference type="GO" id="GO:0042025">
    <property type="term" value="C:host cell nucleus"/>
    <property type="evidence" value="ECO:0007669"/>
    <property type="project" value="UniProtKB-SubCell"/>
</dbReference>
<dbReference type="GO" id="GO:0003677">
    <property type="term" value="F:DNA binding"/>
    <property type="evidence" value="ECO:0007669"/>
    <property type="project" value="InterPro"/>
</dbReference>
<dbReference type="GO" id="GO:0004520">
    <property type="term" value="F:DNA endonuclease activity"/>
    <property type="evidence" value="ECO:0000314"/>
    <property type="project" value="CACAO"/>
</dbReference>
<dbReference type="GO" id="GO:0004529">
    <property type="term" value="F:DNA exonuclease activity"/>
    <property type="evidence" value="ECO:0000314"/>
    <property type="project" value="CACAO"/>
</dbReference>
<dbReference type="HAMAP" id="MF_04009">
    <property type="entry name" value="HSV_AN"/>
    <property type="match status" value="1"/>
</dbReference>
<dbReference type="InterPro" id="IPR001616">
    <property type="entry name" value="Herpes_alk_exo"/>
</dbReference>
<dbReference type="InterPro" id="IPR011335">
    <property type="entry name" value="Restrct_endonuc-II-like"/>
</dbReference>
<dbReference type="InterPro" id="IPR034720">
    <property type="entry name" value="Viral_alk_exo"/>
</dbReference>
<dbReference type="Pfam" id="PF01771">
    <property type="entry name" value="Viral_alk_exo"/>
    <property type="match status" value="1"/>
</dbReference>
<dbReference type="PRINTS" id="PR00924">
    <property type="entry name" value="ALKEXNUCLASE"/>
</dbReference>
<dbReference type="SUPFAM" id="SSF52980">
    <property type="entry name" value="Restriction endonuclease-like"/>
    <property type="match status" value="1"/>
</dbReference>
<protein>
    <recommendedName>
        <fullName evidence="1">Alkaline nuclease</fullName>
        <ecNumber evidence="1">3.1.-.-</ecNumber>
    </recommendedName>
</protein>
<organism>
    <name type="scientific">Human cytomegalovirus (strain Merlin)</name>
    <name type="common">HHV-5</name>
    <name type="synonym">Human herpesvirus 5</name>
    <dbReference type="NCBI Taxonomy" id="295027"/>
    <lineage>
        <taxon>Viruses</taxon>
        <taxon>Duplodnaviria</taxon>
        <taxon>Heunggongvirae</taxon>
        <taxon>Peploviricota</taxon>
        <taxon>Herviviricetes</taxon>
        <taxon>Herpesvirales</taxon>
        <taxon>Orthoherpesviridae</taxon>
        <taxon>Betaherpesvirinae</taxon>
        <taxon>Cytomegalovirus</taxon>
        <taxon>Cytomegalovirus humanbeta5</taxon>
        <taxon>Human cytomegalovirus</taxon>
    </lineage>
</organism>
<feature type="chain" id="PRO_0000417829" description="Alkaline nuclease">
    <location>
        <begin position="1"/>
        <end position="584"/>
    </location>
</feature>
<feature type="region of interest" description="Disordered" evidence="2">
    <location>
        <begin position="409"/>
        <end position="429"/>
    </location>
</feature>
<feature type="site" description="Required for function" evidence="1">
    <location>
        <position position="216"/>
    </location>
</feature>
<feature type="site" description="Required for function" evidence="1">
    <location>
        <position position="254"/>
    </location>
</feature>
<feature type="site" description="Required for function" evidence="1">
    <location>
        <position position="278"/>
    </location>
</feature>
<feature type="site" description="Required for function" evidence="1">
    <location>
        <position position="280"/>
    </location>
</feature>